<name>CH601_MYCUA</name>
<sequence length="539" mass="55886">MSKLIEYDETARRAMEAGVDKLAETVRVTLGPRGRHVVLAKSFGGPTVTNDGVTVARDIDLEDPFENLGAQLVKSVATKTNDVAGDGTTTATVLARALVKTGLRLVAAGINPIALGSGIGKAADAVSEALLASATPVSGKDAIAQVATVSSRDQLIGDLVGEAMSKVGHDGVVSVEESSTLGTELEFTEGVGFDKGYLSAYFVTDFDAQQAVLEDPLILLHQDKISSLPDLLPLLEKVAESGKPLMIIAEDIEGEALATLVVNSIRKTLKAIAVKSPYFGDRRKAFLQDLAAVTGAEVVNPDAGLVLREVGLEVMGSARRVVVSKDDTIIVDGGGAPEAVEARVNLLRSEIDRSDSEWDREKLGERLAKLAGGVAVIKVGAATETELKKRKESVEDAVAAAKAAVEEGIVAGGGSALIQARNALKDLRASLSGDEAVGVDVFSEALAAPLYWIATNAGLDGSVVVNKVSEVPAGHGLNAATLTYGDLAADGIVDPVKVTRSAVLNASSVARMVLTTETAIVDKPAEPEDDGHGHHGHAH</sequence>
<dbReference type="EC" id="5.6.1.7" evidence="1"/>
<dbReference type="EMBL" id="CP000325">
    <property type="protein sequence ID" value="ABL03518.1"/>
    <property type="molecule type" value="Genomic_DNA"/>
</dbReference>
<dbReference type="RefSeq" id="WP_011739141.1">
    <property type="nucleotide sequence ID" value="NC_008611.1"/>
</dbReference>
<dbReference type="SMR" id="A0PME9"/>
<dbReference type="KEGG" id="mul:MUL_0886"/>
<dbReference type="eggNOG" id="COG0459">
    <property type="taxonomic scope" value="Bacteria"/>
</dbReference>
<dbReference type="HOGENOM" id="CLU_016503_3_0_11"/>
<dbReference type="Proteomes" id="UP000000765">
    <property type="component" value="Chromosome"/>
</dbReference>
<dbReference type="GO" id="GO:0005737">
    <property type="term" value="C:cytoplasm"/>
    <property type="evidence" value="ECO:0007669"/>
    <property type="project" value="UniProtKB-SubCell"/>
</dbReference>
<dbReference type="GO" id="GO:0005524">
    <property type="term" value="F:ATP binding"/>
    <property type="evidence" value="ECO:0007669"/>
    <property type="project" value="UniProtKB-UniRule"/>
</dbReference>
<dbReference type="GO" id="GO:0140662">
    <property type="term" value="F:ATP-dependent protein folding chaperone"/>
    <property type="evidence" value="ECO:0007669"/>
    <property type="project" value="InterPro"/>
</dbReference>
<dbReference type="GO" id="GO:0016853">
    <property type="term" value="F:isomerase activity"/>
    <property type="evidence" value="ECO:0007669"/>
    <property type="project" value="UniProtKB-KW"/>
</dbReference>
<dbReference type="GO" id="GO:0051082">
    <property type="term" value="F:unfolded protein binding"/>
    <property type="evidence" value="ECO:0007669"/>
    <property type="project" value="UniProtKB-UniRule"/>
</dbReference>
<dbReference type="GO" id="GO:0042026">
    <property type="term" value="P:protein refolding"/>
    <property type="evidence" value="ECO:0007669"/>
    <property type="project" value="UniProtKB-UniRule"/>
</dbReference>
<dbReference type="CDD" id="cd03344">
    <property type="entry name" value="GroEL"/>
    <property type="match status" value="1"/>
</dbReference>
<dbReference type="FunFam" id="3.50.7.10:FF:000001">
    <property type="entry name" value="60 kDa chaperonin"/>
    <property type="match status" value="1"/>
</dbReference>
<dbReference type="Gene3D" id="3.50.7.10">
    <property type="entry name" value="GroEL"/>
    <property type="match status" value="1"/>
</dbReference>
<dbReference type="Gene3D" id="1.10.560.10">
    <property type="entry name" value="GroEL-like equatorial domain"/>
    <property type="match status" value="1"/>
</dbReference>
<dbReference type="Gene3D" id="3.30.260.10">
    <property type="entry name" value="TCP-1-like chaperonin intermediate domain"/>
    <property type="match status" value="1"/>
</dbReference>
<dbReference type="HAMAP" id="MF_00600">
    <property type="entry name" value="CH60"/>
    <property type="match status" value="1"/>
</dbReference>
<dbReference type="InterPro" id="IPR018370">
    <property type="entry name" value="Chaperonin_Cpn60_CS"/>
</dbReference>
<dbReference type="InterPro" id="IPR001844">
    <property type="entry name" value="Cpn60/GroEL"/>
</dbReference>
<dbReference type="InterPro" id="IPR002423">
    <property type="entry name" value="Cpn60/GroEL/TCP-1"/>
</dbReference>
<dbReference type="InterPro" id="IPR027409">
    <property type="entry name" value="GroEL-like_apical_dom_sf"/>
</dbReference>
<dbReference type="InterPro" id="IPR027413">
    <property type="entry name" value="GROEL-like_equatorial_sf"/>
</dbReference>
<dbReference type="InterPro" id="IPR027410">
    <property type="entry name" value="TCP-1-like_intermed_sf"/>
</dbReference>
<dbReference type="NCBIfam" id="TIGR02348">
    <property type="entry name" value="GroEL"/>
    <property type="match status" value="1"/>
</dbReference>
<dbReference type="NCBIfam" id="NF000592">
    <property type="entry name" value="PRK00013.1"/>
    <property type="match status" value="1"/>
</dbReference>
<dbReference type="NCBIfam" id="NF009487">
    <property type="entry name" value="PRK12849.1"/>
    <property type="match status" value="1"/>
</dbReference>
<dbReference type="NCBIfam" id="NF009488">
    <property type="entry name" value="PRK12850.1"/>
    <property type="match status" value="1"/>
</dbReference>
<dbReference type="NCBIfam" id="NF009489">
    <property type="entry name" value="PRK12851.1"/>
    <property type="match status" value="1"/>
</dbReference>
<dbReference type="PANTHER" id="PTHR45633">
    <property type="entry name" value="60 KDA HEAT SHOCK PROTEIN, MITOCHONDRIAL"/>
    <property type="match status" value="1"/>
</dbReference>
<dbReference type="Pfam" id="PF00118">
    <property type="entry name" value="Cpn60_TCP1"/>
    <property type="match status" value="1"/>
</dbReference>
<dbReference type="PRINTS" id="PR00298">
    <property type="entry name" value="CHAPERONIN60"/>
</dbReference>
<dbReference type="SUPFAM" id="SSF52029">
    <property type="entry name" value="GroEL apical domain-like"/>
    <property type="match status" value="1"/>
</dbReference>
<dbReference type="SUPFAM" id="SSF48592">
    <property type="entry name" value="GroEL equatorial domain-like"/>
    <property type="match status" value="1"/>
</dbReference>
<dbReference type="SUPFAM" id="SSF54849">
    <property type="entry name" value="GroEL-intermediate domain like"/>
    <property type="match status" value="1"/>
</dbReference>
<dbReference type="PROSITE" id="PS00296">
    <property type="entry name" value="CHAPERONINS_CPN60"/>
    <property type="match status" value="1"/>
</dbReference>
<proteinExistence type="inferred from homology"/>
<reference key="1">
    <citation type="journal article" date="2007" name="Genome Res.">
        <title>Reductive evolution and niche adaptation inferred from the genome of Mycobacterium ulcerans, the causative agent of Buruli ulcer.</title>
        <authorList>
            <person name="Stinear T.P."/>
            <person name="Seemann T."/>
            <person name="Pidot S."/>
            <person name="Frigui W."/>
            <person name="Reysset G."/>
            <person name="Garnier T."/>
            <person name="Meurice G."/>
            <person name="Simon D."/>
            <person name="Bouchier C."/>
            <person name="Ma L."/>
            <person name="Tichit M."/>
            <person name="Porter J.L."/>
            <person name="Ryan J."/>
            <person name="Johnson P.D.R."/>
            <person name="Davies J.K."/>
            <person name="Jenkin G.A."/>
            <person name="Small P.L.C."/>
            <person name="Jones L.M."/>
            <person name="Tekaia F."/>
            <person name="Laval F."/>
            <person name="Daffe M."/>
            <person name="Parkhill J."/>
            <person name="Cole S.T."/>
        </authorList>
    </citation>
    <scope>NUCLEOTIDE SEQUENCE [LARGE SCALE GENOMIC DNA]</scope>
    <source>
        <strain>Agy99</strain>
    </source>
</reference>
<feature type="chain" id="PRO_0000332028" description="Chaperonin GroEL 1">
    <location>
        <begin position="1"/>
        <end position="539"/>
    </location>
</feature>
<feature type="region of interest" description="Disordered" evidence="2">
    <location>
        <begin position="520"/>
        <end position="539"/>
    </location>
</feature>
<feature type="compositionally biased region" description="Basic and acidic residues" evidence="2">
    <location>
        <begin position="523"/>
        <end position="533"/>
    </location>
</feature>
<feature type="binding site" evidence="1">
    <location>
        <begin position="29"/>
        <end position="32"/>
    </location>
    <ligand>
        <name>ATP</name>
        <dbReference type="ChEBI" id="CHEBI:30616"/>
    </ligand>
</feature>
<feature type="binding site" evidence="1">
    <location>
        <begin position="86"/>
        <end position="90"/>
    </location>
    <ligand>
        <name>ATP</name>
        <dbReference type="ChEBI" id="CHEBI:30616"/>
    </ligand>
</feature>
<feature type="binding site" evidence="1">
    <location>
        <position position="413"/>
    </location>
    <ligand>
        <name>ATP</name>
        <dbReference type="ChEBI" id="CHEBI:30616"/>
    </ligand>
</feature>
<feature type="binding site" evidence="1">
    <location>
        <begin position="478"/>
        <end position="480"/>
    </location>
    <ligand>
        <name>ATP</name>
        <dbReference type="ChEBI" id="CHEBI:30616"/>
    </ligand>
</feature>
<feature type="binding site" evidence="1">
    <location>
        <position position="494"/>
    </location>
    <ligand>
        <name>ATP</name>
        <dbReference type="ChEBI" id="CHEBI:30616"/>
    </ligand>
</feature>
<keyword id="KW-0067">ATP-binding</keyword>
<keyword id="KW-0143">Chaperone</keyword>
<keyword id="KW-0963">Cytoplasm</keyword>
<keyword id="KW-0413">Isomerase</keyword>
<keyword id="KW-0547">Nucleotide-binding</keyword>
<evidence type="ECO:0000255" key="1">
    <source>
        <dbReference type="HAMAP-Rule" id="MF_00600"/>
    </source>
</evidence>
<evidence type="ECO:0000256" key="2">
    <source>
        <dbReference type="SAM" id="MobiDB-lite"/>
    </source>
</evidence>
<gene>
    <name evidence="1" type="primary">groEL1</name>
    <name evidence="1" type="synonym">groL1</name>
    <name type="ordered locus">MUL_0886</name>
</gene>
<accession>A0PME9</accession>
<protein>
    <recommendedName>
        <fullName evidence="1">Chaperonin GroEL 1</fullName>
        <ecNumber evidence="1">5.6.1.7</ecNumber>
    </recommendedName>
    <alternativeName>
        <fullName evidence="1">60 kDa chaperonin 1</fullName>
    </alternativeName>
    <alternativeName>
        <fullName evidence="1">Chaperonin-60 1</fullName>
        <shortName evidence="1">Cpn60 1</shortName>
    </alternativeName>
</protein>
<organism>
    <name type="scientific">Mycobacterium ulcerans (strain Agy99)</name>
    <dbReference type="NCBI Taxonomy" id="362242"/>
    <lineage>
        <taxon>Bacteria</taxon>
        <taxon>Bacillati</taxon>
        <taxon>Actinomycetota</taxon>
        <taxon>Actinomycetes</taxon>
        <taxon>Mycobacteriales</taxon>
        <taxon>Mycobacteriaceae</taxon>
        <taxon>Mycobacterium</taxon>
        <taxon>Mycobacterium ulcerans group</taxon>
    </lineage>
</organism>
<comment type="function">
    <text evidence="1">Together with its co-chaperonin GroES, plays an essential role in assisting protein folding. The GroEL-GroES system forms a nano-cage that allows encapsulation of the non-native substrate proteins and provides a physical environment optimized to promote and accelerate protein folding.</text>
</comment>
<comment type="catalytic activity">
    <reaction evidence="1">
        <text>ATP + H2O + a folded polypeptide = ADP + phosphate + an unfolded polypeptide.</text>
        <dbReference type="EC" id="5.6.1.7"/>
    </reaction>
</comment>
<comment type="subunit">
    <text evidence="1">Forms a cylinder of 14 subunits composed of two heptameric rings stacked back-to-back. Interacts with the co-chaperonin GroES.</text>
</comment>
<comment type="subcellular location">
    <subcellularLocation>
        <location evidence="1">Cytoplasm</location>
    </subcellularLocation>
</comment>
<comment type="similarity">
    <text evidence="1">Belongs to the chaperonin (HSP60) family.</text>
</comment>